<feature type="chain" id="PRO_0000377396" description="Protein phosphatase PTC7 homolog fig">
    <location>
        <begin position="1"/>
        <end position="317"/>
    </location>
</feature>
<feature type="domain" description="PPM-type phosphatase" evidence="4">
    <location>
        <begin position="46"/>
        <end position="312"/>
    </location>
</feature>
<feature type="binding site" evidence="1">
    <location>
        <position position="90"/>
    </location>
    <ligand>
        <name>Mn(2+)</name>
        <dbReference type="ChEBI" id="CHEBI:29035"/>
        <label>1</label>
    </ligand>
</feature>
<feature type="binding site" evidence="1">
    <location>
        <position position="90"/>
    </location>
    <ligand>
        <name>Mn(2+)</name>
        <dbReference type="ChEBI" id="CHEBI:29035"/>
        <label>2</label>
    </ligand>
</feature>
<feature type="binding site" evidence="1">
    <location>
        <position position="91"/>
    </location>
    <ligand>
        <name>Mn(2+)</name>
        <dbReference type="ChEBI" id="CHEBI:29035"/>
        <label>1</label>
    </ligand>
</feature>
<feature type="binding site" evidence="1">
    <location>
        <position position="235"/>
    </location>
    <ligand>
        <name>Mn(2+)</name>
        <dbReference type="ChEBI" id="CHEBI:29035"/>
        <label>2</label>
    </ligand>
</feature>
<accession>B3P5D3</accession>
<keyword id="KW-0378">Hydrolase</keyword>
<keyword id="KW-0460">Magnesium</keyword>
<keyword id="KW-0464">Manganese</keyword>
<keyword id="KW-0479">Metal-binding</keyword>
<keyword id="KW-0904">Protein phosphatase</keyword>
<organism>
    <name type="scientific">Drosophila erecta</name>
    <name type="common">Fruit fly</name>
    <dbReference type="NCBI Taxonomy" id="7220"/>
    <lineage>
        <taxon>Eukaryota</taxon>
        <taxon>Metazoa</taxon>
        <taxon>Ecdysozoa</taxon>
        <taxon>Arthropoda</taxon>
        <taxon>Hexapoda</taxon>
        <taxon>Insecta</taxon>
        <taxon>Pterygota</taxon>
        <taxon>Neoptera</taxon>
        <taxon>Endopterygota</taxon>
        <taxon>Diptera</taxon>
        <taxon>Brachycera</taxon>
        <taxon>Muscomorpha</taxon>
        <taxon>Ephydroidea</taxon>
        <taxon>Drosophilidae</taxon>
        <taxon>Drosophila</taxon>
        <taxon>Sophophora</taxon>
    </lineage>
</organism>
<proteinExistence type="inferred from homology"/>
<gene>
    <name evidence="2" type="primary">fig</name>
    <name type="ORF">GG12003</name>
</gene>
<comment type="catalytic activity">
    <reaction>
        <text>O-phospho-L-seryl-[protein] + H2O = L-seryl-[protein] + phosphate</text>
        <dbReference type="Rhea" id="RHEA:20629"/>
        <dbReference type="Rhea" id="RHEA-COMP:9863"/>
        <dbReference type="Rhea" id="RHEA-COMP:11604"/>
        <dbReference type="ChEBI" id="CHEBI:15377"/>
        <dbReference type="ChEBI" id="CHEBI:29999"/>
        <dbReference type="ChEBI" id="CHEBI:43474"/>
        <dbReference type="ChEBI" id="CHEBI:83421"/>
        <dbReference type="EC" id="3.1.3.16"/>
    </reaction>
</comment>
<comment type="catalytic activity">
    <reaction>
        <text>O-phospho-L-threonyl-[protein] + H2O = L-threonyl-[protein] + phosphate</text>
        <dbReference type="Rhea" id="RHEA:47004"/>
        <dbReference type="Rhea" id="RHEA-COMP:11060"/>
        <dbReference type="Rhea" id="RHEA-COMP:11605"/>
        <dbReference type="ChEBI" id="CHEBI:15377"/>
        <dbReference type="ChEBI" id="CHEBI:30013"/>
        <dbReference type="ChEBI" id="CHEBI:43474"/>
        <dbReference type="ChEBI" id="CHEBI:61977"/>
        <dbReference type="EC" id="3.1.3.16"/>
    </reaction>
</comment>
<comment type="cofactor">
    <cofactor evidence="1 5">
        <name>Mg(2+)</name>
        <dbReference type="ChEBI" id="CHEBI:18420"/>
    </cofactor>
    <cofactor evidence="1 5">
        <name>Mn(2+)</name>
        <dbReference type="ChEBI" id="CHEBI:29035"/>
    </cofactor>
</comment>
<comment type="similarity">
    <text evidence="3">Belongs to the PP2C family.</text>
</comment>
<name>PTC71_DROER</name>
<protein>
    <recommendedName>
        <fullName>Protein phosphatase PTC7 homolog fig</fullName>
    </recommendedName>
    <alternativeName>
        <fullName>Fos intronic gene protein</fullName>
        <ecNumber>3.1.3.16</ecNumber>
    </alternativeName>
</protein>
<sequence>MITRLKNWPRLLKTPLQIARHSIQQFSHLAGHYERPPQSGKSSRDPYLVTVVQGRSKKPRFPGERANQRFGEDSWFVRSTPLAEVMGVADGVGGWRDVGVDAGRFAKELMTCCSGQTQRSGFDGRSPRNLLIASFQELTHREHPVVGSSTACLATMHRKDCTLYTANLGDSGFLVVRNGRVLHRSVEQTHDFNTPYQLTVPPEDRKECYYCDKPEMAVSTRHSLLPGDLVLLATDGLFDNMPESMLLKILNGLKERGERDLLQCASQVVEKARELSLNATFQSPFAIKARQHNVSYSGGGKPDDITLILASVEVQSA</sequence>
<evidence type="ECO:0000250" key="1">
    <source>
        <dbReference type="UniProtKB" id="P35813"/>
    </source>
</evidence>
<evidence type="ECO:0000250" key="2">
    <source>
        <dbReference type="UniProtKB" id="Q9VAH4"/>
    </source>
</evidence>
<evidence type="ECO:0000255" key="3"/>
<evidence type="ECO:0000255" key="4">
    <source>
        <dbReference type="PROSITE-ProRule" id="PRU01082"/>
    </source>
</evidence>
<evidence type="ECO:0000305" key="5"/>
<evidence type="ECO:0000312" key="6">
    <source>
        <dbReference type="EMBL" id="EDV53183.1"/>
    </source>
</evidence>
<reference evidence="6" key="1">
    <citation type="journal article" date="2007" name="Nature">
        <title>Evolution of genes and genomes on the Drosophila phylogeny.</title>
        <authorList>
            <consortium name="Drosophila 12 genomes consortium"/>
        </authorList>
    </citation>
    <scope>NUCLEOTIDE SEQUENCE [LARGE SCALE GENOMIC DNA]</scope>
    <source>
        <strain evidence="6">Tucson 14021-0224.01</strain>
    </source>
</reference>
<dbReference type="EC" id="3.1.3.16"/>
<dbReference type="EMBL" id="CH954182">
    <property type="protein sequence ID" value="EDV53183.1"/>
    <property type="molecule type" value="Genomic_DNA"/>
</dbReference>
<dbReference type="SMR" id="B3P5D3"/>
<dbReference type="EnsemblMetazoa" id="FBtr0132057">
    <property type="protein sequence ID" value="FBpp0130549"/>
    <property type="gene ID" value="FBgn0104295"/>
</dbReference>
<dbReference type="EnsemblMetazoa" id="XM_001981277.3">
    <property type="protein sequence ID" value="XP_001981313.1"/>
    <property type="gene ID" value="LOC6554553"/>
</dbReference>
<dbReference type="GeneID" id="6554553"/>
<dbReference type="KEGG" id="der:6554553"/>
<dbReference type="CTD" id="43511"/>
<dbReference type="eggNOG" id="KOG1379">
    <property type="taxonomic scope" value="Eukaryota"/>
</dbReference>
<dbReference type="HOGENOM" id="CLU_029404_3_0_1"/>
<dbReference type="OMA" id="DSWFVSS"/>
<dbReference type="OrthoDB" id="60843at2759"/>
<dbReference type="PhylomeDB" id="B3P5D3"/>
<dbReference type="Proteomes" id="UP000008711">
    <property type="component" value="Unassembled WGS sequence"/>
</dbReference>
<dbReference type="GO" id="GO:0005739">
    <property type="term" value="C:mitochondrion"/>
    <property type="evidence" value="ECO:0007669"/>
    <property type="project" value="TreeGrafter"/>
</dbReference>
<dbReference type="GO" id="GO:0046872">
    <property type="term" value="F:metal ion binding"/>
    <property type="evidence" value="ECO:0007669"/>
    <property type="project" value="UniProtKB-KW"/>
</dbReference>
<dbReference type="GO" id="GO:0004722">
    <property type="term" value="F:protein serine/threonine phosphatase activity"/>
    <property type="evidence" value="ECO:0000250"/>
    <property type="project" value="UniProtKB"/>
</dbReference>
<dbReference type="GO" id="GO:0016311">
    <property type="term" value="P:dephosphorylation"/>
    <property type="evidence" value="ECO:0000250"/>
    <property type="project" value="UniProtKB"/>
</dbReference>
<dbReference type="FunFam" id="3.60.40.10:FF:000009">
    <property type="entry name" value="Blast:Protein phosphatase PTC7 homolog"/>
    <property type="match status" value="1"/>
</dbReference>
<dbReference type="Gene3D" id="3.60.40.10">
    <property type="entry name" value="PPM-type phosphatase domain"/>
    <property type="match status" value="1"/>
</dbReference>
<dbReference type="InterPro" id="IPR036457">
    <property type="entry name" value="PPM-type-like_dom_sf"/>
</dbReference>
<dbReference type="InterPro" id="IPR001932">
    <property type="entry name" value="PPM-type_phosphatase-like_dom"/>
</dbReference>
<dbReference type="InterPro" id="IPR039123">
    <property type="entry name" value="PPTC7"/>
</dbReference>
<dbReference type="PANTHER" id="PTHR12320">
    <property type="entry name" value="PROTEIN PHOSPHATASE 2C"/>
    <property type="match status" value="1"/>
</dbReference>
<dbReference type="PANTHER" id="PTHR12320:SF1">
    <property type="entry name" value="PROTEIN PHOSPHATASE PTC7 HOMOLOG"/>
    <property type="match status" value="1"/>
</dbReference>
<dbReference type="Pfam" id="PF07228">
    <property type="entry name" value="SpoIIE"/>
    <property type="match status" value="1"/>
</dbReference>
<dbReference type="SMART" id="SM00331">
    <property type="entry name" value="PP2C_SIG"/>
    <property type="match status" value="1"/>
</dbReference>
<dbReference type="SMART" id="SM00332">
    <property type="entry name" value="PP2Cc"/>
    <property type="match status" value="1"/>
</dbReference>
<dbReference type="SUPFAM" id="SSF81606">
    <property type="entry name" value="PP2C-like"/>
    <property type="match status" value="1"/>
</dbReference>
<dbReference type="PROSITE" id="PS51746">
    <property type="entry name" value="PPM_2"/>
    <property type="match status" value="1"/>
</dbReference>